<name>SYTC_ARATH</name>
<evidence type="ECO:0000250" key="1"/>
<evidence type="ECO:0000255" key="2">
    <source>
        <dbReference type="PROSITE-ProRule" id="PRU01228"/>
    </source>
</evidence>
<evidence type="ECO:0000303" key="3">
    <source>
    </source>
</evidence>
<evidence type="ECO:0000305" key="4"/>
<keyword id="KW-0025">Alternative splicing</keyword>
<keyword id="KW-0030">Aminoacyl-tRNA synthetase</keyword>
<keyword id="KW-0067">ATP-binding</keyword>
<keyword id="KW-0963">Cytoplasm</keyword>
<keyword id="KW-0436">Ligase</keyword>
<keyword id="KW-0547">Nucleotide-binding</keyword>
<keyword id="KW-0648">Protein biosynthesis</keyword>
<keyword id="KW-1185">Reference proteome</keyword>
<dbReference type="EC" id="6.1.1.3"/>
<dbReference type="EMBL" id="AC034106">
    <property type="protein sequence ID" value="AAF97275.1"/>
    <property type="molecule type" value="Genomic_DNA"/>
</dbReference>
<dbReference type="EMBL" id="CP002684">
    <property type="protein sequence ID" value="AEE29656.1"/>
    <property type="molecule type" value="Genomic_DNA"/>
</dbReference>
<dbReference type="EMBL" id="AK117218">
    <property type="protein sequence ID" value="BAC41894.1"/>
    <property type="molecule type" value="mRNA"/>
</dbReference>
<dbReference type="PIR" id="H86314">
    <property type="entry name" value="H86314"/>
</dbReference>
<dbReference type="RefSeq" id="NP_173238.1">
    <molecule id="Q8GZ45-1"/>
    <property type="nucleotide sequence ID" value="NM_101659.3"/>
</dbReference>
<dbReference type="SMR" id="Q8GZ45"/>
<dbReference type="BioGRID" id="23614">
    <property type="interactions" value="13"/>
</dbReference>
<dbReference type="FunCoup" id="Q8GZ45">
    <property type="interactions" value="56"/>
</dbReference>
<dbReference type="STRING" id="3702.Q8GZ45"/>
<dbReference type="PaxDb" id="3702-AT1G17960.1"/>
<dbReference type="ProteomicsDB" id="233037">
    <molecule id="Q8GZ45-1"/>
</dbReference>
<dbReference type="EnsemblPlants" id="AT1G17960.1">
    <molecule id="Q8GZ45-1"/>
    <property type="protein sequence ID" value="AT1G17960.1"/>
    <property type="gene ID" value="AT1G17960"/>
</dbReference>
<dbReference type="GeneID" id="838375"/>
<dbReference type="Gramene" id="AT1G17960.1">
    <molecule id="Q8GZ45-1"/>
    <property type="protein sequence ID" value="AT1G17960.1"/>
    <property type="gene ID" value="AT1G17960"/>
</dbReference>
<dbReference type="KEGG" id="ath:AT1G17960"/>
<dbReference type="Araport" id="AT1G17960"/>
<dbReference type="TAIR" id="AT1G17960"/>
<dbReference type="eggNOG" id="KOG1637">
    <property type="taxonomic scope" value="Eukaryota"/>
</dbReference>
<dbReference type="HOGENOM" id="CLU_008554_2_1_1"/>
<dbReference type="InParanoid" id="Q8GZ45"/>
<dbReference type="OMA" id="MLTSAYD"/>
<dbReference type="OrthoDB" id="5423599at2759"/>
<dbReference type="PhylomeDB" id="Q8GZ45"/>
<dbReference type="PRO" id="PR:Q8GZ45"/>
<dbReference type="Proteomes" id="UP000006548">
    <property type="component" value="Chromosome 1"/>
</dbReference>
<dbReference type="ExpressionAtlas" id="Q8GZ45">
    <property type="expression patterns" value="baseline and differential"/>
</dbReference>
<dbReference type="GO" id="GO:0005737">
    <property type="term" value="C:cytoplasm"/>
    <property type="evidence" value="ECO:0007669"/>
    <property type="project" value="UniProtKB-SubCell"/>
</dbReference>
<dbReference type="GO" id="GO:0005524">
    <property type="term" value="F:ATP binding"/>
    <property type="evidence" value="ECO:0007669"/>
    <property type="project" value="UniProtKB-KW"/>
</dbReference>
<dbReference type="GO" id="GO:0004829">
    <property type="term" value="F:threonine-tRNA ligase activity"/>
    <property type="evidence" value="ECO:0007669"/>
    <property type="project" value="UniProtKB-EC"/>
</dbReference>
<dbReference type="GO" id="GO:0006435">
    <property type="term" value="P:threonyl-tRNA aminoacylation"/>
    <property type="evidence" value="ECO:0007669"/>
    <property type="project" value="InterPro"/>
</dbReference>
<dbReference type="CDD" id="cd01667">
    <property type="entry name" value="TGS_ThrRS"/>
    <property type="match status" value="1"/>
</dbReference>
<dbReference type="CDD" id="cd00860">
    <property type="entry name" value="ThrRS_anticodon"/>
    <property type="match status" value="1"/>
</dbReference>
<dbReference type="FunFam" id="3.30.930.10:FF:000213">
    <property type="entry name" value="Probable threonine--tRNA ligase, cytoplasmic"/>
    <property type="match status" value="1"/>
</dbReference>
<dbReference type="FunFam" id="3.40.50.800:FF:000019">
    <property type="entry name" value="Threonine--tRNA ligase mitochondrial 1"/>
    <property type="match status" value="1"/>
</dbReference>
<dbReference type="FunFam" id="3.10.20.30:FF:000006">
    <property type="entry name" value="Threonine--tRNA ligase, cytoplasmic"/>
    <property type="match status" value="1"/>
</dbReference>
<dbReference type="Gene3D" id="3.10.20.30">
    <property type="match status" value="1"/>
</dbReference>
<dbReference type="Gene3D" id="3.40.50.800">
    <property type="entry name" value="Anticodon-binding domain"/>
    <property type="match status" value="1"/>
</dbReference>
<dbReference type="Gene3D" id="3.30.930.10">
    <property type="entry name" value="Bira Bifunctional Protein, Domain 2"/>
    <property type="match status" value="1"/>
</dbReference>
<dbReference type="InterPro" id="IPR002314">
    <property type="entry name" value="aa-tRNA-synt_IIb"/>
</dbReference>
<dbReference type="InterPro" id="IPR006195">
    <property type="entry name" value="aa-tRNA-synth_II"/>
</dbReference>
<dbReference type="InterPro" id="IPR045864">
    <property type="entry name" value="aa-tRNA-synth_II/BPL/LPL"/>
</dbReference>
<dbReference type="InterPro" id="IPR004154">
    <property type="entry name" value="Anticodon-bd"/>
</dbReference>
<dbReference type="InterPro" id="IPR036621">
    <property type="entry name" value="Anticodon-bd_dom_sf"/>
</dbReference>
<dbReference type="InterPro" id="IPR012675">
    <property type="entry name" value="Beta-grasp_dom_sf"/>
</dbReference>
<dbReference type="InterPro" id="IPR004095">
    <property type="entry name" value="TGS"/>
</dbReference>
<dbReference type="InterPro" id="IPR012676">
    <property type="entry name" value="TGS-like"/>
</dbReference>
<dbReference type="InterPro" id="IPR002320">
    <property type="entry name" value="Thr-tRNA-ligase_IIa"/>
</dbReference>
<dbReference type="InterPro" id="IPR018163">
    <property type="entry name" value="Thr/Ala-tRNA-synth_IIc_edit"/>
</dbReference>
<dbReference type="InterPro" id="IPR047246">
    <property type="entry name" value="ThrRS_anticodon"/>
</dbReference>
<dbReference type="PANTHER" id="PTHR11451:SF46">
    <property type="entry name" value="THREONINE--TRNA LIGASE"/>
    <property type="match status" value="1"/>
</dbReference>
<dbReference type="PANTHER" id="PTHR11451">
    <property type="entry name" value="THREONINE-TRNA LIGASE"/>
    <property type="match status" value="1"/>
</dbReference>
<dbReference type="Pfam" id="PF03129">
    <property type="entry name" value="HGTP_anticodon"/>
    <property type="match status" value="1"/>
</dbReference>
<dbReference type="Pfam" id="PF02824">
    <property type="entry name" value="TGS"/>
    <property type="match status" value="1"/>
</dbReference>
<dbReference type="Pfam" id="PF00587">
    <property type="entry name" value="tRNA-synt_2b"/>
    <property type="match status" value="1"/>
</dbReference>
<dbReference type="PRINTS" id="PR01047">
    <property type="entry name" value="TRNASYNTHTHR"/>
</dbReference>
<dbReference type="SUPFAM" id="SSF52954">
    <property type="entry name" value="Class II aaRS ABD-related"/>
    <property type="match status" value="1"/>
</dbReference>
<dbReference type="SUPFAM" id="SSF55681">
    <property type="entry name" value="Class II aaRS and biotin synthetases"/>
    <property type="match status" value="1"/>
</dbReference>
<dbReference type="SUPFAM" id="SSF81271">
    <property type="entry name" value="TGS-like"/>
    <property type="match status" value="1"/>
</dbReference>
<dbReference type="SUPFAM" id="SSF55186">
    <property type="entry name" value="ThrRS/AlaRS common domain"/>
    <property type="match status" value="1"/>
</dbReference>
<dbReference type="PROSITE" id="PS50862">
    <property type="entry name" value="AA_TRNA_LIGASE_II"/>
    <property type="match status" value="1"/>
</dbReference>
<dbReference type="PROSITE" id="PS51880">
    <property type="entry name" value="TGS"/>
    <property type="match status" value="1"/>
</dbReference>
<organism>
    <name type="scientific">Arabidopsis thaliana</name>
    <name type="common">Mouse-ear cress</name>
    <dbReference type="NCBI Taxonomy" id="3702"/>
    <lineage>
        <taxon>Eukaryota</taxon>
        <taxon>Viridiplantae</taxon>
        <taxon>Streptophyta</taxon>
        <taxon>Embryophyta</taxon>
        <taxon>Tracheophyta</taxon>
        <taxon>Spermatophyta</taxon>
        <taxon>Magnoliopsida</taxon>
        <taxon>eudicotyledons</taxon>
        <taxon>Gunneridae</taxon>
        <taxon>Pentapetalae</taxon>
        <taxon>rosids</taxon>
        <taxon>malvids</taxon>
        <taxon>Brassicales</taxon>
        <taxon>Brassicaceae</taxon>
        <taxon>Camelineae</taxon>
        <taxon>Arabidopsis</taxon>
    </lineage>
</organism>
<gene>
    <name type="ordered locus">At1g17960</name>
    <name type="ORF">F2H15.18</name>
</gene>
<feature type="chain" id="PRO_0000101123" description="Probable threonine--tRNA ligase, cytoplasmic">
    <location>
        <begin position="1"/>
        <end position="458"/>
    </location>
</feature>
<feature type="domain" description="TGS" evidence="2">
    <location>
        <begin position="41"/>
        <end position="104"/>
    </location>
</feature>
<feature type="splice variant" id="VSP_017125" description="In isoform 2." evidence="3">
    <original>KLPIRMAEFGVLHRNEDS</original>
    <variation>SVAYISFADIFFVLRYGM</variation>
    <location>
        <begin position="169"/>
        <end position="186"/>
    </location>
</feature>
<feature type="splice variant" id="VSP_017126" description="In isoform 2." evidence="3">
    <location>
        <begin position="187"/>
        <end position="458"/>
    </location>
</feature>
<proteinExistence type="evidence at transcript level"/>
<accession>Q8GZ45</accession>
<accession>Q9LMT4</accession>
<reference key="1">
    <citation type="journal article" date="2000" name="Nature">
        <title>Sequence and analysis of chromosome 1 of the plant Arabidopsis thaliana.</title>
        <authorList>
            <person name="Theologis A."/>
            <person name="Ecker J.R."/>
            <person name="Palm C.J."/>
            <person name="Federspiel N.A."/>
            <person name="Kaul S."/>
            <person name="White O."/>
            <person name="Alonso J."/>
            <person name="Altafi H."/>
            <person name="Araujo R."/>
            <person name="Bowman C.L."/>
            <person name="Brooks S.Y."/>
            <person name="Buehler E."/>
            <person name="Chan A."/>
            <person name="Chao Q."/>
            <person name="Chen H."/>
            <person name="Cheuk R.F."/>
            <person name="Chin C.W."/>
            <person name="Chung M.K."/>
            <person name="Conn L."/>
            <person name="Conway A.B."/>
            <person name="Conway A.R."/>
            <person name="Creasy T.H."/>
            <person name="Dewar K."/>
            <person name="Dunn P."/>
            <person name="Etgu P."/>
            <person name="Feldblyum T.V."/>
            <person name="Feng J.-D."/>
            <person name="Fong B."/>
            <person name="Fujii C.Y."/>
            <person name="Gill J.E."/>
            <person name="Goldsmith A.D."/>
            <person name="Haas B."/>
            <person name="Hansen N.F."/>
            <person name="Hughes B."/>
            <person name="Huizar L."/>
            <person name="Hunter J.L."/>
            <person name="Jenkins J."/>
            <person name="Johnson-Hopson C."/>
            <person name="Khan S."/>
            <person name="Khaykin E."/>
            <person name="Kim C.J."/>
            <person name="Koo H.L."/>
            <person name="Kremenetskaia I."/>
            <person name="Kurtz D.B."/>
            <person name="Kwan A."/>
            <person name="Lam B."/>
            <person name="Langin-Hooper S."/>
            <person name="Lee A."/>
            <person name="Lee J.M."/>
            <person name="Lenz C.A."/>
            <person name="Li J.H."/>
            <person name="Li Y.-P."/>
            <person name="Lin X."/>
            <person name="Liu S.X."/>
            <person name="Liu Z.A."/>
            <person name="Luros J.S."/>
            <person name="Maiti R."/>
            <person name="Marziali A."/>
            <person name="Militscher J."/>
            <person name="Miranda M."/>
            <person name="Nguyen M."/>
            <person name="Nierman W.C."/>
            <person name="Osborne B.I."/>
            <person name="Pai G."/>
            <person name="Peterson J."/>
            <person name="Pham P.K."/>
            <person name="Rizzo M."/>
            <person name="Rooney T."/>
            <person name="Rowley D."/>
            <person name="Sakano H."/>
            <person name="Salzberg S.L."/>
            <person name="Schwartz J.R."/>
            <person name="Shinn P."/>
            <person name="Southwick A.M."/>
            <person name="Sun H."/>
            <person name="Tallon L.J."/>
            <person name="Tambunga G."/>
            <person name="Toriumi M.J."/>
            <person name="Town C.D."/>
            <person name="Utterback T."/>
            <person name="Van Aken S."/>
            <person name="Vaysberg M."/>
            <person name="Vysotskaia V.S."/>
            <person name="Walker M."/>
            <person name="Wu D."/>
            <person name="Yu G."/>
            <person name="Fraser C.M."/>
            <person name="Venter J.C."/>
            <person name="Davis R.W."/>
        </authorList>
    </citation>
    <scope>NUCLEOTIDE SEQUENCE [LARGE SCALE GENOMIC DNA]</scope>
    <source>
        <strain>cv. Columbia</strain>
    </source>
</reference>
<reference key="2">
    <citation type="journal article" date="2017" name="Plant J.">
        <title>Araport11: a complete reannotation of the Arabidopsis thaliana reference genome.</title>
        <authorList>
            <person name="Cheng C.Y."/>
            <person name="Krishnakumar V."/>
            <person name="Chan A.P."/>
            <person name="Thibaud-Nissen F."/>
            <person name="Schobel S."/>
            <person name="Town C.D."/>
        </authorList>
    </citation>
    <scope>GENOME REANNOTATION</scope>
    <source>
        <strain>cv. Columbia</strain>
    </source>
</reference>
<reference key="3">
    <citation type="journal article" date="2002" name="Science">
        <title>Functional annotation of a full-length Arabidopsis cDNA collection.</title>
        <authorList>
            <person name="Seki M."/>
            <person name="Narusaka M."/>
            <person name="Kamiya A."/>
            <person name="Ishida J."/>
            <person name="Satou M."/>
            <person name="Sakurai T."/>
            <person name="Nakajima M."/>
            <person name="Enju A."/>
            <person name="Akiyama K."/>
            <person name="Oono Y."/>
            <person name="Muramatsu M."/>
            <person name="Hayashizaki Y."/>
            <person name="Kawai J."/>
            <person name="Carninci P."/>
            <person name="Itoh M."/>
            <person name="Ishii Y."/>
            <person name="Arakawa T."/>
            <person name="Shibata K."/>
            <person name="Shinagawa A."/>
            <person name="Shinozaki K."/>
        </authorList>
    </citation>
    <scope>NUCLEOTIDE SEQUENCE [LARGE SCALE MRNA] (ISOFORM 2)</scope>
    <source>
        <strain>cv. Columbia</strain>
    </source>
</reference>
<protein>
    <recommendedName>
        <fullName>Probable threonine--tRNA ligase, cytoplasmic</fullName>
        <ecNumber>6.1.1.3</ecNumber>
    </recommendedName>
    <alternativeName>
        <fullName>Threonyl-tRNA synthetase</fullName>
        <shortName>ThrRS</shortName>
    </alternativeName>
</protein>
<comment type="catalytic activity">
    <reaction>
        <text>tRNA(Thr) + L-threonine + ATP = L-threonyl-tRNA(Thr) + AMP + diphosphate + H(+)</text>
        <dbReference type="Rhea" id="RHEA:24624"/>
        <dbReference type="Rhea" id="RHEA-COMP:9670"/>
        <dbReference type="Rhea" id="RHEA-COMP:9704"/>
        <dbReference type="ChEBI" id="CHEBI:15378"/>
        <dbReference type="ChEBI" id="CHEBI:30616"/>
        <dbReference type="ChEBI" id="CHEBI:33019"/>
        <dbReference type="ChEBI" id="CHEBI:57926"/>
        <dbReference type="ChEBI" id="CHEBI:78442"/>
        <dbReference type="ChEBI" id="CHEBI:78534"/>
        <dbReference type="ChEBI" id="CHEBI:456215"/>
        <dbReference type="EC" id="6.1.1.3"/>
    </reaction>
</comment>
<comment type="subcellular location">
    <subcellularLocation>
        <location evidence="1">Cytoplasm</location>
    </subcellularLocation>
</comment>
<comment type="alternative products">
    <event type="alternative splicing"/>
    <isoform>
        <id>Q8GZ45-1</id>
        <name>1</name>
        <sequence type="displayed"/>
    </isoform>
    <isoform>
        <id>Q8GZ45-2</id>
        <name>2</name>
        <sequence type="described" ref="VSP_017125 VSP_017126"/>
    </isoform>
</comment>
<comment type="miscellaneous">
    <molecule>Isoform 2</molecule>
    <text evidence="4">May be due to intron retention.</text>
</comment>
<comment type="similarity">
    <text evidence="4">Belongs to the class-II aminoacyl-tRNA synthetase family.</text>
</comment>
<sequence>MANNHHPKDEAYLSSVIPKRIRLFEEIQAEQLEQLQSRPHDPIKITLLPDGIEKEGRRWETSPMDIAVQISKGLAKSALVSSVNHVLWDMNRPLEGDCSLEIFGFDSDQGRNTFWHSSAHILGQALEQEYGCKLCIGPCEPRDEGFYYDSLYYGELGLNDNHFPNIEAKLPIRMAEFGVLHRNEDSGALGGMTRVRRFVQDDAHIFCRVDQVEEEVKGVLDFIDYVYRIFGFTYELTLSTRPKDHIGDLETWAKAENDLEKALDDFGKPWVIKEGDGAFYGPKIDITVSDARNRKFQCATIQLDFQLPACFKLKYLSEKNEMEAPVMIHSAVLGSIERMFAILLEHYKGIWPFWLSPRQAIVCSLSEDCSSYAKQVQKQINEVGYYVDIDESDRSLRKKVADARDAPYNYILVVGQKEVATGQVTVRLREDPEGRKDLPEMSIESLLDEFKFKTVNFL</sequence>